<name>PME33_ARATH</name>
<sequence>MLRGIFHICLLASFLLLPFSSAVHDSGFTGGTDAPPPWDHNVSPPPETAPSPTPTSSPSTTSPPSPGPVAAPSPINNGSVSGDMTWWCNKTPHAETCNYYFRKSSQNNINLRPPRFRSEFLRMLVKVALDQAVITHSQTVKFGPSCTNNQRKAAWSDCVNLFQNTVAQLNRTLKGLNPAASSDVKCTDFDAQTWLSTAQTNIETCRSGSEDLNVSDFVMPVISNKNLSDLIGNCLAVNGVLMKQHDHTTTANHKEYFPSWVSRHERRLLVSASLAKSSPHLVVAQDRSGHFRSIQAAINFAARRRFKSRFVIYVKKGVYRENIDVGNDNHNIMLVGDGERKTIITSGRSVQHGYTTYNSATGGFGGQRFVAKDMTFINTAGPLRGQAVAVRSSSDLSVFYRVGIHGFQDTLYIHSQRQFFRECYISGTIDFIFGNAAVVFQNCMILVRRPLHGQANIITAQGRGDPFQNTGITIHSSRIIAASDLKPVIRAYKTYLGRPWQAYSRVTIMKTYIDNSISPLGWSPWLRGSNFALNTVFYGEYKNFGPGSSTRWRVRWKGFHAITSTAVASRFTVGSLIAGGSWLPATGVPFKSGL</sequence>
<comment type="function">
    <text evidence="1">Acts in the modification of cell walls via demethylesterification of cell wall pectin.</text>
</comment>
<comment type="catalytic activity">
    <reaction>
        <text>[(1-&gt;4)-alpha-D-galacturonosyl methyl ester](n) + n H2O = [(1-&gt;4)-alpha-D-galacturonosyl](n) + n methanol + n H(+)</text>
        <dbReference type="Rhea" id="RHEA:22380"/>
        <dbReference type="Rhea" id="RHEA-COMP:14570"/>
        <dbReference type="Rhea" id="RHEA-COMP:14573"/>
        <dbReference type="ChEBI" id="CHEBI:15377"/>
        <dbReference type="ChEBI" id="CHEBI:15378"/>
        <dbReference type="ChEBI" id="CHEBI:17790"/>
        <dbReference type="ChEBI" id="CHEBI:140522"/>
        <dbReference type="ChEBI" id="CHEBI:140523"/>
        <dbReference type="EC" id="3.1.1.11"/>
    </reaction>
</comment>
<comment type="pathway">
    <text>Glycan metabolism; pectin degradation; 2-dehydro-3-deoxy-D-gluconate from pectin: step 1/5.</text>
</comment>
<comment type="subcellular location">
    <subcellularLocation>
        <location evidence="1">Secreted</location>
        <location evidence="1">Cell wall</location>
    </subcellularLocation>
</comment>
<comment type="tissue specificity">
    <text evidence="5">Expressed in siliques.</text>
</comment>
<comment type="developmental stage">
    <text evidence="5">Expressed throughout silique development.</text>
</comment>
<comment type="miscellaneous">
    <text>The PMEI region may act as an autoinhibitory domain and prevent untimely PME activity during transport.</text>
</comment>
<comment type="similarity">
    <text evidence="6">In the N-terminal section; belongs to the PMEI family.</text>
</comment>
<comment type="similarity">
    <text evidence="6">In the C-terminal section; belongs to the pectinesterase family.</text>
</comment>
<dbReference type="EC" id="3.1.1.11"/>
<dbReference type="EMBL" id="AL096860">
    <property type="protein sequence ID" value="CAB51212.1"/>
    <property type="molecule type" value="Genomic_DNA"/>
</dbReference>
<dbReference type="EMBL" id="CP002686">
    <property type="protein sequence ID" value="AEE78277.1"/>
    <property type="molecule type" value="Genomic_DNA"/>
</dbReference>
<dbReference type="EMBL" id="AK227314">
    <property type="status" value="NOT_ANNOTATED_CDS"/>
    <property type="molecule type" value="mRNA"/>
</dbReference>
<dbReference type="PIR" id="T12995">
    <property type="entry name" value="T12995"/>
</dbReference>
<dbReference type="RefSeq" id="NP_190324.1">
    <property type="nucleotide sequence ID" value="NM_114608.3"/>
</dbReference>
<dbReference type="SMR" id="Q9STY3"/>
<dbReference type="FunCoup" id="Q9STY3">
    <property type="interactions" value="144"/>
</dbReference>
<dbReference type="STRING" id="3702.Q9STY3"/>
<dbReference type="GlyCosmos" id="Q9STY3">
    <property type="glycosylation" value="4 sites, No reported glycans"/>
</dbReference>
<dbReference type="GlyGen" id="Q9STY3">
    <property type="glycosylation" value="5 sites"/>
</dbReference>
<dbReference type="iPTMnet" id="Q9STY3"/>
<dbReference type="PaxDb" id="3702-AT3G47400.1"/>
<dbReference type="ProteomicsDB" id="226275"/>
<dbReference type="EnsemblPlants" id="AT3G47400.1">
    <property type="protein sequence ID" value="AT3G47400.1"/>
    <property type="gene ID" value="AT3G47400"/>
</dbReference>
<dbReference type="GeneID" id="823894"/>
<dbReference type="Gramene" id="AT3G47400.1">
    <property type="protein sequence ID" value="AT3G47400.1"/>
    <property type="gene ID" value="AT3G47400"/>
</dbReference>
<dbReference type="KEGG" id="ath:AT3G47400"/>
<dbReference type="Araport" id="AT3G47400"/>
<dbReference type="TAIR" id="AT3G47400"/>
<dbReference type="eggNOG" id="ENOG502QU67">
    <property type="taxonomic scope" value="Eukaryota"/>
</dbReference>
<dbReference type="HOGENOM" id="CLU_012243_9_1_1"/>
<dbReference type="InParanoid" id="Q9STY3"/>
<dbReference type="OMA" id="RCAFQGY"/>
<dbReference type="PhylomeDB" id="Q9STY3"/>
<dbReference type="BioCyc" id="ARA:AT3G47400-MONOMER"/>
<dbReference type="UniPathway" id="UPA00545">
    <property type="reaction ID" value="UER00823"/>
</dbReference>
<dbReference type="PRO" id="PR:Q9STY3"/>
<dbReference type="Proteomes" id="UP000006548">
    <property type="component" value="Chromosome 3"/>
</dbReference>
<dbReference type="ExpressionAtlas" id="Q9STY3">
    <property type="expression patterns" value="baseline and differential"/>
</dbReference>
<dbReference type="GO" id="GO:0005576">
    <property type="term" value="C:extracellular region"/>
    <property type="evidence" value="ECO:0007669"/>
    <property type="project" value="UniProtKB-KW"/>
</dbReference>
<dbReference type="GO" id="GO:0004857">
    <property type="term" value="F:enzyme inhibitor activity"/>
    <property type="evidence" value="ECO:0007669"/>
    <property type="project" value="InterPro"/>
</dbReference>
<dbReference type="GO" id="GO:0030599">
    <property type="term" value="F:pectinesterase activity"/>
    <property type="evidence" value="ECO:0007669"/>
    <property type="project" value="UniProtKB-EC"/>
</dbReference>
<dbReference type="GO" id="GO:0042545">
    <property type="term" value="P:cell wall modification"/>
    <property type="evidence" value="ECO:0007669"/>
    <property type="project" value="InterPro"/>
</dbReference>
<dbReference type="GO" id="GO:0045490">
    <property type="term" value="P:pectin catabolic process"/>
    <property type="evidence" value="ECO:0007669"/>
    <property type="project" value="UniProtKB-UniPathway"/>
</dbReference>
<dbReference type="CDD" id="cd15798">
    <property type="entry name" value="PMEI-like_3"/>
    <property type="match status" value="1"/>
</dbReference>
<dbReference type="FunFam" id="1.20.140.40:FF:000033">
    <property type="entry name" value="Pectinesterase"/>
    <property type="match status" value="1"/>
</dbReference>
<dbReference type="FunFam" id="2.160.20.10:FF:000001">
    <property type="entry name" value="Pectinesterase"/>
    <property type="match status" value="1"/>
</dbReference>
<dbReference type="Gene3D" id="1.20.140.40">
    <property type="entry name" value="Invertase/pectin methylesterase inhibitor family protein"/>
    <property type="match status" value="1"/>
</dbReference>
<dbReference type="Gene3D" id="2.160.20.10">
    <property type="entry name" value="Single-stranded right-handed beta-helix, Pectin lyase-like"/>
    <property type="match status" value="1"/>
</dbReference>
<dbReference type="InterPro" id="IPR035513">
    <property type="entry name" value="Invertase/methylesterase_inhib"/>
</dbReference>
<dbReference type="InterPro" id="IPR012334">
    <property type="entry name" value="Pectin_lyas_fold"/>
</dbReference>
<dbReference type="InterPro" id="IPR011050">
    <property type="entry name" value="Pectin_lyase_fold/virulence"/>
</dbReference>
<dbReference type="InterPro" id="IPR033131">
    <property type="entry name" value="Pectinesterase_Asp_AS"/>
</dbReference>
<dbReference type="InterPro" id="IPR000070">
    <property type="entry name" value="Pectinesterase_cat"/>
</dbReference>
<dbReference type="InterPro" id="IPR006501">
    <property type="entry name" value="Pectinesterase_inhib_dom"/>
</dbReference>
<dbReference type="NCBIfam" id="TIGR01614">
    <property type="entry name" value="PME_inhib"/>
    <property type="match status" value="1"/>
</dbReference>
<dbReference type="PANTHER" id="PTHR31707">
    <property type="entry name" value="PECTINESTERASE"/>
    <property type="match status" value="1"/>
</dbReference>
<dbReference type="Pfam" id="PF01095">
    <property type="entry name" value="Pectinesterase"/>
    <property type="match status" value="1"/>
</dbReference>
<dbReference type="Pfam" id="PF04043">
    <property type="entry name" value="PMEI"/>
    <property type="match status" value="1"/>
</dbReference>
<dbReference type="SMART" id="SM00856">
    <property type="entry name" value="PMEI"/>
    <property type="match status" value="1"/>
</dbReference>
<dbReference type="SUPFAM" id="SSF51126">
    <property type="entry name" value="Pectin lyase-like"/>
    <property type="match status" value="1"/>
</dbReference>
<dbReference type="SUPFAM" id="SSF101148">
    <property type="entry name" value="Plant invertase/pectin methylesterase inhibitor"/>
    <property type="match status" value="1"/>
</dbReference>
<dbReference type="PROSITE" id="PS00503">
    <property type="entry name" value="PECTINESTERASE_2"/>
    <property type="match status" value="1"/>
</dbReference>
<protein>
    <recommendedName>
        <fullName>Probable pectinesterase/pectinesterase inhibitor 33</fullName>
    </recommendedName>
    <domain>
        <recommendedName>
            <fullName>Pectinesterase inhibitor 33</fullName>
        </recommendedName>
        <alternativeName>
            <fullName>Pectin methylesterase inhibitor 33</fullName>
        </alternativeName>
    </domain>
    <domain>
        <recommendedName>
            <fullName>Pectinesterase 33</fullName>
            <shortName>PE 33</shortName>
            <ecNumber>3.1.1.11</ecNumber>
        </recommendedName>
        <alternativeName>
            <fullName>Pectin methylesterase 33</fullName>
            <shortName>AtPME33</shortName>
        </alternativeName>
    </domain>
</protein>
<proteinExistence type="evidence at transcript level"/>
<organism>
    <name type="scientific">Arabidopsis thaliana</name>
    <name type="common">Mouse-ear cress</name>
    <dbReference type="NCBI Taxonomy" id="3702"/>
    <lineage>
        <taxon>Eukaryota</taxon>
        <taxon>Viridiplantae</taxon>
        <taxon>Streptophyta</taxon>
        <taxon>Embryophyta</taxon>
        <taxon>Tracheophyta</taxon>
        <taxon>Spermatophyta</taxon>
        <taxon>Magnoliopsida</taxon>
        <taxon>eudicotyledons</taxon>
        <taxon>Gunneridae</taxon>
        <taxon>Pentapetalae</taxon>
        <taxon>rosids</taxon>
        <taxon>malvids</taxon>
        <taxon>Brassicales</taxon>
        <taxon>Brassicaceae</taxon>
        <taxon>Camelineae</taxon>
        <taxon>Arabidopsis</taxon>
    </lineage>
</organism>
<keyword id="KW-0063">Aspartyl esterase</keyword>
<keyword id="KW-0134">Cell wall</keyword>
<keyword id="KW-0961">Cell wall biogenesis/degradation</keyword>
<keyword id="KW-1015">Disulfide bond</keyword>
<keyword id="KW-0325">Glycoprotein</keyword>
<keyword id="KW-0378">Hydrolase</keyword>
<keyword id="KW-1185">Reference proteome</keyword>
<keyword id="KW-0964">Secreted</keyword>
<keyword id="KW-0732">Signal</keyword>
<reference key="1">
    <citation type="journal article" date="2000" name="Nature">
        <title>Sequence and analysis of chromosome 3 of the plant Arabidopsis thaliana.</title>
        <authorList>
            <person name="Salanoubat M."/>
            <person name="Lemcke K."/>
            <person name="Rieger M."/>
            <person name="Ansorge W."/>
            <person name="Unseld M."/>
            <person name="Fartmann B."/>
            <person name="Valle G."/>
            <person name="Bloecker H."/>
            <person name="Perez-Alonso M."/>
            <person name="Obermaier B."/>
            <person name="Delseny M."/>
            <person name="Boutry M."/>
            <person name="Grivell L.A."/>
            <person name="Mache R."/>
            <person name="Puigdomenech P."/>
            <person name="De Simone V."/>
            <person name="Choisne N."/>
            <person name="Artiguenave F."/>
            <person name="Robert C."/>
            <person name="Brottier P."/>
            <person name="Wincker P."/>
            <person name="Cattolico L."/>
            <person name="Weissenbach J."/>
            <person name="Saurin W."/>
            <person name="Quetier F."/>
            <person name="Schaefer M."/>
            <person name="Mueller-Auer S."/>
            <person name="Gabel C."/>
            <person name="Fuchs M."/>
            <person name="Benes V."/>
            <person name="Wurmbach E."/>
            <person name="Drzonek H."/>
            <person name="Erfle H."/>
            <person name="Jordan N."/>
            <person name="Bangert S."/>
            <person name="Wiedelmann R."/>
            <person name="Kranz H."/>
            <person name="Voss H."/>
            <person name="Holland R."/>
            <person name="Brandt P."/>
            <person name="Nyakatura G."/>
            <person name="Vezzi A."/>
            <person name="D'Angelo M."/>
            <person name="Pallavicini A."/>
            <person name="Toppo S."/>
            <person name="Simionati B."/>
            <person name="Conrad A."/>
            <person name="Hornischer K."/>
            <person name="Kauer G."/>
            <person name="Loehnert T.-H."/>
            <person name="Nordsiek G."/>
            <person name="Reichelt J."/>
            <person name="Scharfe M."/>
            <person name="Schoen O."/>
            <person name="Bargues M."/>
            <person name="Terol J."/>
            <person name="Climent J."/>
            <person name="Navarro P."/>
            <person name="Collado C."/>
            <person name="Perez-Perez A."/>
            <person name="Ottenwaelder B."/>
            <person name="Duchemin D."/>
            <person name="Cooke R."/>
            <person name="Laudie M."/>
            <person name="Berger-Llauro C."/>
            <person name="Purnelle B."/>
            <person name="Masuy D."/>
            <person name="de Haan M."/>
            <person name="Maarse A.C."/>
            <person name="Alcaraz J.-P."/>
            <person name="Cottet A."/>
            <person name="Casacuberta E."/>
            <person name="Monfort A."/>
            <person name="Argiriou A."/>
            <person name="Flores M."/>
            <person name="Liguori R."/>
            <person name="Vitale D."/>
            <person name="Mannhaupt G."/>
            <person name="Haase D."/>
            <person name="Schoof H."/>
            <person name="Rudd S."/>
            <person name="Zaccaria P."/>
            <person name="Mewes H.-W."/>
            <person name="Mayer K.F.X."/>
            <person name="Kaul S."/>
            <person name="Town C.D."/>
            <person name="Koo H.L."/>
            <person name="Tallon L.J."/>
            <person name="Jenkins J."/>
            <person name="Rooney T."/>
            <person name="Rizzo M."/>
            <person name="Walts A."/>
            <person name="Utterback T."/>
            <person name="Fujii C.Y."/>
            <person name="Shea T.P."/>
            <person name="Creasy T.H."/>
            <person name="Haas B."/>
            <person name="Maiti R."/>
            <person name="Wu D."/>
            <person name="Peterson J."/>
            <person name="Van Aken S."/>
            <person name="Pai G."/>
            <person name="Militscher J."/>
            <person name="Sellers P."/>
            <person name="Gill J.E."/>
            <person name="Feldblyum T.V."/>
            <person name="Preuss D."/>
            <person name="Lin X."/>
            <person name="Nierman W.C."/>
            <person name="Salzberg S.L."/>
            <person name="White O."/>
            <person name="Venter J.C."/>
            <person name="Fraser C.M."/>
            <person name="Kaneko T."/>
            <person name="Nakamura Y."/>
            <person name="Sato S."/>
            <person name="Kato T."/>
            <person name="Asamizu E."/>
            <person name="Sasamoto S."/>
            <person name="Kimura T."/>
            <person name="Idesawa K."/>
            <person name="Kawashima K."/>
            <person name="Kishida Y."/>
            <person name="Kiyokawa C."/>
            <person name="Kohara M."/>
            <person name="Matsumoto M."/>
            <person name="Matsuno A."/>
            <person name="Muraki A."/>
            <person name="Nakayama S."/>
            <person name="Nakazaki N."/>
            <person name="Shinpo S."/>
            <person name="Takeuchi C."/>
            <person name="Wada T."/>
            <person name="Watanabe A."/>
            <person name="Yamada M."/>
            <person name="Yasuda M."/>
            <person name="Tabata S."/>
        </authorList>
    </citation>
    <scope>NUCLEOTIDE SEQUENCE [LARGE SCALE GENOMIC DNA]</scope>
    <source>
        <strain>cv. Columbia</strain>
    </source>
</reference>
<reference key="2">
    <citation type="journal article" date="2017" name="Plant J.">
        <title>Araport11: a complete reannotation of the Arabidopsis thaliana reference genome.</title>
        <authorList>
            <person name="Cheng C.Y."/>
            <person name="Krishnakumar V."/>
            <person name="Chan A.P."/>
            <person name="Thibaud-Nissen F."/>
            <person name="Schobel S."/>
            <person name="Town C.D."/>
        </authorList>
    </citation>
    <scope>GENOME REANNOTATION</scope>
    <source>
        <strain>cv. Columbia</strain>
    </source>
</reference>
<reference key="3">
    <citation type="submission" date="2006-07" db="EMBL/GenBank/DDBJ databases">
        <title>Large-scale analysis of RIKEN Arabidopsis full-length (RAFL) cDNAs.</title>
        <authorList>
            <person name="Totoki Y."/>
            <person name="Seki M."/>
            <person name="Ishida J."/>
            <person name="Nakajima M."/>
            <person name="Enju A."/>
            <person name="Kamiya A."/>
            <person name="Narusaka M."/>
            <person name="Shin-i T."/>
            <person name="Nakagawa M."/>
            <person name="Sakamoto N."/>
            <person name="Oishi K."/>
            <person name="Kohara Y."/>
            <person name="Kobayashi M."/>
            <person name="Toyoda A."/>
            <person name="Sakaki Y."/>
            <person name="Sakurai T."/>
            <person name="Iida K."/>
            <person name="Akiyama K."/>
            <person name="Satou M."/>
            <person name="Toyoda T."/>
            <person name="Konagaya A."/>
            <person name="Carninci P."/>
            <person name="Kawai J."/>
            <person name="Hayashizaki Y."/>
            <person name="Shinozaki K."/>
        </authorList>
    </citation>
    <scope>NUCLEOTIDE SEQUENCE [LARGE SCALE MRNA]</scope>
    <source>
        <strain>cv. Columbia</strain>
    </source>
</reference>
<reference key="4">
    <citation type="journal article" date="2004" name="Carbohydr. Res.">
        <title>Pectin methylesterases: sequence-structural features and phylogenetic relationships.</title>
        <authorList>
            <person name="Markovic O."/>
            <person name="Janecek S."/>
        </authorList>
    </citation>
    <scope>GENE FAMILY</scope>
    <scope>NOMENCLATURE</scope>
</reference>
<reference key="5">
    <citation type="journal article" date="2006" name="Planta">
        <title>Comprehensive expression profiling of the pectin methylesterase gene family during silique development in Arabidopsis thaliana.</title>
        <authorList>
            <person name="Louvet R."/>
            <person name="Cavel E."/>
            <person name="Gutierrez L."/>
            <person name="Guenin S."/>
            <person name="Roger D."/>
            <person name="Gillet F."/>
            <person name="Guerineau F."/>
            <person name="Pelloux J."/>
        </authorList>
    </citation>
    <scope>TISSUE SPECIFICITY</scope>
    <scope>DEVELOPMENTAL STAGE</scope>
</reference>
<accession>Q9STY3</accession>
<evidence type="ECO:0000250" key="1"/>
<evidence type="ECO:0000255" key="2"/>
<evidence type="ECO:0000255" key="3">
    <source>
        <dbReference type="PROSITE-ProRule" id="PRU10040"/>
    </source>
</evidence>
<evidence type="ECO:0000256" key="4">
    <source>
        <dbReference type="SAM" id="MobiDB-lite"/>
    </source>
</evidence>
<evidence type="ECO:0000269" key="5">
    <source>
    </source>
</evidence>
<evidence type="ECO:0000305" key="6"/>
<feature type="signal peptide" evidence="2">
    <location>
        <begin position="1"/>
        <end position="22"/>
    </location>
</feature>
<feature type="chain" id="PRO_0000371685" description="Probable pectinesterase/pectinesterase inhibitor 33">
    <location>
        <begin position="23"/>
        <end position="594"/>
    </location>
</feature>
<feature type="region of interest" description="Disordered" evidence="4">
    <location>
        <begin position="28"/>
        <end position="75"/>
    </location>
</feature>
<feature type="region of interest" description="Pectinesterase inhibitor 33">
    <location>
        <begin position="78"/>
        <end position="237"/>
    </location>
</feature>
<feature type="region of interest" description="Pectinesterase 33">
    <location>
        <begin position="280"/>
        <end position="581"/>
    </location>
</feature>
<feature type="compositionally biased region" description="Pro residues" evidence="4">
    <location>
        <begin position="34"/>
        <end position="71"/>
    </location>
</feature>
<feature type="active site" description="Proton donor; for pectinesterase activity" evidence="3">
    <location>
        <position position="409"/>
    </location>
</feature>
<feature type="active site" description="Nucleophile; for pectinesterase activity" evidence="3">
    <location>
        <position position="430"/>
    </location>
</feature>
<feature type="binding site" evidence="1">
    <location>
        <position position="356"/>
    </location>
    <ligand>
        <name>substrate</name>
        <note>for pectinesterase activity</note>
    </ligand>
</feature>
<feature type="binding site" evidence="1">
    <location>
        <position position="386"/>
    </location>
    <ligand>
        <name>substrate</name>
        <note>for pectinesterase activity</note>
    </ligand>
</feature>
<feature type="binding site" evidence="1">
    <location>
        <position position="498"/>
    </location>
    <ligand>
        <name>substrate</name>
        <note>for pectinesterase activity</note>
    </ligand>
</feature>
<feature type="binding site" evidence="1">
    <location>
        <position position="500"/>
    </location>
    <ligand>
        <name>substrate</name>
        <note>for pectinesterase activity</note>
    </ligand>
</feature>
<feature type="site" description="Transition state stabilizer" evidence="1">
    <location>
        <position position="408"/>
    </location>
</feature>
<feature type="glycosylation site" description="N-linked (GlcNAc...) asparagine" evidence="2">
    <location>
        <position position="77"/>
    </location>
</feature>
<feature type="glycosylation site" description="N-linked (GlcNAc...) asparagine" evidence="2">
    <location>
        <position position="170"/>
    </location>
</feature>
<feature type="glycosylation site" description="N-linked (GlcNAc...) asparagine" evidence="2">
    <location>
        <position position="213"/>
    </location>
</feature>
<feature type="glycosylation site" description="N-linked (GlcNAc...) asparagine" evidence="2">
    <location>
        <position position="226"/>
    </location>
</feature>
<feature type="disulfide bond" evidence="1">
    <location>
        <begin position="423"/>
        <end position="443"/>
    </location>
</feature>
<gene>
    <name type="primary">PME33</name>
    <name type="synonym">ARATH33</name>
    <name type="ordered locus">At3g47400</name>
    <name type="ORF">T21L8.150</name>
</gene>